<organism>
    <name type="scientific">Ehrlichia chaffeensis (strain ATCC CRL-10679 / Arkansas)</name>
    <dbReference type="NCBI Taxonomy" id="205920"/>
    <lineage>
        <taxon>Bacteria</taxon>
        <taxon>Pseudomonadati</taxon>
        <taxon>Pseudomonadota</taxon>
        <taxon>Alphaproteobacteria</taxon>
        <taxon>Rickettsiales</taxon>
        <taxon>Anaplasmataceae</taxon>
        <taxon>Ehrlichia</taxon>
    </lineage>
</organism>
<name>RL34_EHRCR</name>
<protein>
    <recommendedName>
        <fullName evidence="1">Large ribosomal subunit protein bL34</fullName>
    </recommendedName>
    <alternativeName>
        <fullName evidence="2">50S ribosomal protein L34</fullName>
    </alternativeName>
</protein>
<keyword id="KW-1185">Reference proteome</keyword>
<keyword id="KW-0687">Ribonucleoprotein</keyword>
<keyword id="KW-0689">Ribosomal protein</keyword>
<feature type="chain" id="PRO_1000013336" description="Large ribosomal subunit protein bL34">
    <location>
        <begin position="1"/>
        <end position="44"/>
    </location>
</feature>
<gene>
    <name evidence="1" type="primary">rpmH</name>
    <name type="ordered locus">ECH_0440</name>
</gene>
<reference key="1">
    <citation type="journal article" date="2006" name="PLoS Genet.">
        <title>Comparative genomics of emerging human ehrlichiosis agents.</title>
        <authorList>
            <person name="Dunning Hotopp J.C."/>
            <person name="Lin M."/>
            <person name="Madupu R."/>
            <person name="Crabtree J."/>
            <person name="Angiuoli S.V."/>
            <person name="Eisen J.A."/>
            <person name="Seshadri R."/>
            <person name="Ren Q."/>
            <person name="Wu M."/>
            <person name="Utterback T.R."/>
            <person name="Smith S."/>
            <person name="Lewis M."/>
            <person name="Khouri H."/>
            <person name="Zhang C."/>
            <person name="Niu H."/>
            <person name="Lin Q."/>
            <person name="Ohashi N."/>
            <person name="Zhi N."/>
            <person name="Nelson W.C."/>
            <person name="Brinkac L.M."/>
            <person name="Dodson R.J."/>
            <person name="Rosovitz M.J."/>
            <person name="Sundaram J.P."/>
            <person name="Daugherty S.C."/>
            <person name="Davidsen T."/>
            <person name="Durkin A.S."/>
            <person name="Gwinn M.L."/>
            <person name="Haft D.H."/>
            <person name="Selengut J.D."/>
            <person name="Sullivan S.A."/>
            <person name="Zafar N."/>
            <person name="Zhou L."/>
            <person name="Benahmed F."/>
            <person name="Forberger H."/>
            <person name="Halpin R."/>
            <person name="Mulligan S."/>
            <person name="Robinson J."/>
            <person name="White O."/>
            <person name="Rikihisa Y."/>
            <person name="Tettelin H."/>
        </authorList>
    </citation>
    <scope>NUCLEOTIDE SEQUENCE [LARGE SCALE GENOMIC DNA]</scope>
    <source>
        <strain>ATCC CRL-10679 / Arkansas</strain>
    </source>
</reference>
<sequence>MKGTFQPSRIVRKRRHGFRSRMSTKMGRRILNRRRAQGRRVLCA</sequence>
<accession>Q2GH25</accession>
<comment type="similarity">
    <text evidence="1">Belongs to the bacterial ribosomal protein bL34 family.</text>
</comment>
<dbReference type="EMBL" id="CP000236">
    <property type="protein sequence ID" value="ABD44636.1"/>
    <property type="molecule type" value="Genomic_DNA"/>
</dbReference>
<dbReference type="SMR" id="Q2GH25"/>
<dbReference type="STRING" id="205920.ECH_0440"/>
<dbReference type="KEGG" id="ech:ECH_0440"/>
<dbReference type="eggNOG" id="COG0230">
    <property type="taxonomic scope" value="Bacteria"/>
</dbReference>
<dbReference type="HOGENOM" id="CLU_129938_2_0_5"/>
<dbReference type="OrthoDB" id="9804164at2"/>
<dbReference type="Proteomes" id="UP000008320">
    <property type="component" value="Chromosome"/>
</dbReference>
<dbReference type="GO" id="GO:1990904">
    <property type="term" value="C:ribonucleoprotein complex"/>
    <property type="evidence" value="ECO:0007669"/>
    <property type="project" value="UniProtKB-KW"/>
</dbReference>
<dbReference type="GO" id="GO:0005840">
    <property type="term" value="C:ribosome"/>
    <property type="evidence" value="ECO:0007669"/>
    <property type="project" value="UniProtKB-KW"/>
</dbReference>
<dbReference type="GO" id="GO:0003735">
    <property type="term" value="F:structural constituent of ribosome"/>
    <property type="evidence" value="ECO:0007669"/>
    <property type="project" value="InterPro"/>
</dbReference>
<dbReference type="GO" id="GO:0006412">
    <property type="term" value="P:translation"/>
    <property type="evidence" value="ECO:0007669"/>
    <property type="project" value="UniProtKB-UniRule"/>
</dbReference>
<dbReference type="FunFam" id="1.10.287.3980:FF:000001">
    <property type="entry name" value="Mitochondrial ribosomal protein L34"/>
    <property type="match status" value="1"/>
</dbReference>
<dbReference type="Gene3D" id="1.10.287.3980">
    <property type="match status" value="1"/>
</dbReference>
<dbReference type="HAMAP" id="MF_00391">
    <property type="entry name" value="Ribosomal_bL34"/>
    <property type="match status" value="1"/>
</dbReference>
<dbReference type="InterPro" id="IPR000271">
    <property type="entry name" value="Ribosomal_bL34"/>
</dbReference>
<dbReference type="InterPro" id="IPR020939">
    <property type="entry name" value="Ribosomal_bL34_CS"/>
</dbReference>
<dbReference type="NCBIfam" id="TIGR01030">
    <property type="entry name" value="rpmH_bact"/>
    <property type="match status" value="1"/>
</dbReference>
<dbReference type="PANTHER" id="PTHR14503:SF4">
    <property type="entry name" value="LARGE RIBOSOMAL SUBUNIT PROTEIN BL34M"/>
    <property type="match status" value="1"/>
</dbReference>
<dbReference type="PANTHER" id="PTHR14503">
    <property type="entry name" value="MITOCHONDRIAL RIBOSOMAL PROTEIN 34 FAMILY MEMBER"/>
    <property type="match status" value="1"/>
</dbReference>
<dbReference type="Pfam" id="PF00468">
    <property type="entry name" value="Ribosomal_L34"/>
    <property type="match status" value="1"/>
</dbReference>
<dbReference type="PROSITE" id="PS00784">
    <property type="entry name" value="RIBOSOMAL_L34"/>
    <property type="match status" value="1"/>
</dbReference>
<proteinExistence type="inferred from homology"/>
<evidence type="ECO:0000255" key="1">
    <source>
        <dbReference type="HAMAP-Rule" id="MF_00391"/>
    </source>
</evidence>
<evidence type="ECO:0000305" key="2"/>